<accession>Q8SRU3</accession>
<evidence type="ECO:0000250" key="1"/>
<evidence type="ECO:0000255" key="2">
    <source>
        <dbReference type="PROSITE-ProRule" id="PRU00808"/>
    </source>
</evidence>
<evidence type="ECO:0000269" key="3">
    <source>
    </source>
</evidence>
<protein>
    <recommendedName>
        <fullName>Probable proteasome subunit alpha type-5</fullName>
    </recommendedName>
    <alternativeName>
        <fullName>26S proteasome alpha-type subunit PUP2</fullName>
    </alternativeName>
    <alternativeName>
        <fullName>Multicatalytic endopeptidase complex subunit PUP2</fullName>
    </alternativeName>
</protein>
<comment type="function">
    <text evidence="1">The proteasome degrades poly-ubiquitinated proteins in the cytoplasm and in the nucleus. It is essential for the regulated turnover of proteins and for the removal of misfolded proteins. The proteasome is a multicatalytic proteinase complex that is characterized by its ability to cleave peptides with Arg, Phe, Tyr, Leu, and Glu adjacent to the leaving group at neutral or slightly basic pH. It has an ATP-dependent proteolytic activity (By similarity).</text>
</comment>
<comment type="subunit">
    <text evidence="1">The 26S proteasome consists of a 20S proteasome core and two 19S regulatory subunits. The 20S proteasome core is composed of 28 subunits that are arranged in four stacked rings, resulting in a barrel-shaped structure. The two end rings are each formed by seven alpha subunits, and the two central rings are each formed by seven beta subunits. The catalytic chamber with the active sites is on the inside of the barrel (By similarity).</text>
</comment>
<comment type="subcellular location">
    <subcellularLocation>
        <location evidence="1">Cytoplasm</location>
    </subcellularLocation>
    <subcellularLocation>
        <location evidence="1">Nucleus</location>
    </subcellularLocation>
</comment>
<comment type="developmental stage">
    <text evidence="3">Expressed in late sporogonial stages.</text>
</comment>
<comment type="similarity">
    <text evidence="2">Belongs to the peptidase T1A family.</text>
</comment>
<keyword id="KW-0963">Cytoplasm</keyword>
<keyword id="KW-0539">Nucleus</keyword>
<keyword id="KW-0647">Proteasome</keyword>
<keyword id="KW-1185">Reference proteome</keyword>
<sequence>MEDFKQSVNTYSSEGRIHQIEYAMKAMNLGTTTIGVRTKEFVILCSEKKILSTLQNPKSVVKHYKIYDHIVLGFSGISGDTKTIVKRSRDFCISHTHMYGENISVERLLKYLSSLSLRFGEEDEAKMIFRRPFGVSLIIAGFDTEPRLYSLDPSGSYISYKAKAIGSGHEVVEGILENEYEEYSGLDQSLRKVLCTLSKVMKDKISKDNVEVVVVTQEESKFLTPEEVSVYL</sequence>
<reference key="1">
    <citation type="journal article" date="2001" name="Nature">
        <title>Genome sequence and gene compaction of the eukaryote parasite Encephalitozoon cuniculi.</title>
        <authorList>
            <person name="Katinka M.D."/>
            <person name="Duprat S."/>
            <person name="Cornillot E."/>
            <person name="Metenier G."/>
            <person name="Thomarat F."/>
            <person name="Prensier G."/>
            <person name="Barbe V."/>
            <person name="Peyretaillade E."/>
            <person name="Brottier P."/>
            <person name="Wincker P."/>
            <person name="Delbac F."/>
            <person name="El Alaoui H."/>
            <person name="Peyret P."/>
            <person name="Saurin W."/>
            <person name="Gouy M."/>
            <person name="Weissenbach J."/>
            <person name="Vivares C.P."/>
        </authorList>
    </citation>
    <scope>NUCLEOTIDE SEQUENCE [LARGE SCALE GENOMIC DNA]</scope>
    <source>
        <strain>GB-M1</strain>
    </source>
</reference>
<reference key="2">
    <citation type="journal article" date="2006" name="Proteomics">
        <title>Proteomic analysis of the eukaryotic parasite Encephalitozoon cuniculi (microsporidia): a reference map for proteins expressed in late sporogonial stages.</title>
        <authorList>
            <person name="Brosson D."/>
            <person name="Kuhn L."/>
            <person name="Delbac F."/>
            <person name="Garin J."/>
            <person name="Vivares C.P."/>
            <person name="Texier C."/>
        </authorList>
    </citation>
    <scope>IDENTIFICATION BY MASS SPECTROMETRY [LARGE SCALE ANALYSIS]</scope>
    <scope>DEVELOPMENTAL STAGE</scope>
</reference>
<proteinExistence type="evidence at protein level"/>
<name>PSA5_ENCCU</name>
<dbReference type="EMBL" id="AL590445">
    <property type="protein sequence ID" value="CAD26660.1"/>
    <property type="molecule type" value="Genomic_DNA"/>
</dbReference>
<dbReference type="RefSeq" id="NP_597483.1">
    <property type="nucleotide sequence ID" value="NM_001041349.1"/>
</dbReference>
<dbReference type="SMR" id="Q8SRU3"/>
<dbReference type="FunCoup" id="Q8SRU3">
    <property type="interactions" value="271"/>
</dbReference>
<dbReference type="STRING" id="284813.Q8SRU3"/>
<dbReference type="GeneID" id="859150"/>
<dbReference type="KEGG" id="ecu:ECU05_1400"/>
<dbReference type="VEuPathDB" id="MicrosporidiaDB:ECU05_1400"/>
<dbReference type="HOGENOM" id="CLU_035750_4_2_1"/>
<dbReference type="InParanoid" id="Q8SRU3"/>
<dbReference type="OMA" id="RSMIDHA"/>
<dbReference type="OrthoDB" id="431557at2759"/>
<dbReference type="Proteomes" id="UP000000819">
    <property type="component" value="Chromosome V"/>
</dbReference>
<dbReference type="GO" id="GO:0005737">
    <property type="term" value="C:cytoplasm"/>
    <property type="evidence" value="ECO:0007669"/>
    <property type="project" value="UniProtKB-SubCell"/>
</dbReference>
<dbReference type="GO" id="GO:0005634">
    <property type="term" value="C:nucleus"/>
    <property type="evidence" value="ECO:0007669"/>
    <property type="project" value="UniProtKB-SubCell"/>
</dbReference>
<dbReference type="GO" id="GO:0019773">
    <property type="term" value="C:proteasome core complex, alpha-subunit complex"/>
    <property type="evidence" value="ECO:0000250"/>
    <property type="project" value="UniProtKB"/>
</dbReference>
<dbReference type="GO" id="GO:0006511">
    <property type="term" value="P:ubiquitin-dependent protein catabolic process"/>
    <property type="evidence" value="ECO:0007669"/>
    <property type="project" value="InterPro"/>
</dbReference>
<dbReference type="FunFam" id="3.60.20.10:FF:000140">
    <property type="entry name" value="Proteasome endopeptidase complex"/>
    <property type="match status" value="1"/>
</dbReference>
<dbReference type="Gene3D" id="3.60.20.10">
    <property type="entry name" value="Glutamine Phosphoribosylpyrophosphate, subunit 1, domain 1"/>
    <property type="match status" value="1"/>
</dbReference>
<dbReference type="InterPro" id="IPR029055">
    <property type="entry name" value="Ntn_hydrolases_N"/>
</dbReference>
<dbReference type="InterPro" id="IPR050115">
    <property type="entry name" value="Proteasome_alpha"/>
</dbReference>
<dbReference type="InterPro" id="IPR023332">
    <property type="entry name" value="Proteasome_alpha-type"/>
</dbReference>
<dbReference type="InterPro" id="IPR000426">
    <property type="entry name" value="Proteasome_asu_N"/>
</dbReference>
<dbReference type="InterPro" id="IPR001353">
    <property type="entry name" value="Proteasome_sua/b"/>
</dbReference>
<dbReference type="PANTHER" id="PTHR11599">
    <property type="entry name" value="PROTEASOME SUBUNIT ALPHA/BETA"/>
    <property type="match status" value="1"/>
</dbReference>
<dbReference type="Pfam" id="PF00227">
    <property type="entry name" value="Proteasome"/>
    <property type="match status" value="1"/>
</dbReference>
<dbReference type="Pfam" id="PF10584">
    <property type="entry name" value="Proteasome_A_N"/>
    <property type="match status" value="1"/>
</dbReference>
<dbReference type="SMART" id="SM00948">
    <property type="entry name" value="Proteasome_A_N"/>
    <property type="match status" value="1"/>
</dbReference>
<dbReference type="SUPFAM" id="SSF56235">
    <property type="entry name" value="N-terminal nucleophile aminohydrolases (Ntn hydrolases)"/>
    <property type="match status" value="1"/>
</dbReference>
<dbReference type="PROSITE" id="PS00388">
    <property type="entry name" value="PROTEASOME_ALPHA_1"/>
    <property type="match status" value="1"/>
</dbReference>
<dbReference type="PROSITE" id="PS51475">
    <property type="entry name" value="PROTEASOME_ALPHA_2"/>
    <property type="match status" value="1"/>
</dbReference>
<organism>
    <name type="scientific">Encephalitozoon cuniculi (strain GB-M1)</name>
    <name type="common">Microsporidian parasite</name>
    <dbReference type="NCBI Taxonomy" id="284813"/>
    <lineage>
        <taxon>Eukaryota</taxon>
        <taxon>Fungi</taxon>
        <taxon>Fungi incertae sedis</taxon>
        <taxon>Microsporidia</taxon>
        <taxon>Unikaryonidae</taxon>
        <taxon>Encephalitozoon</taxon>
    </lineage>
</organism>
<feature type="chain" id="PRO_0000382756" description="Probable proteasome subunit alpha type-5">
    <location>
        <begin position="1"/>
        <end position="232"/>
    </location>
</feature>
<gene>
    <name type="primary">PUP2</name>
    <name type="ordered locus">ECU05_1400</name>
</gene>